<accession>Q9ST98</accession>
<protein>
    <recommendedName>
        <fullName>Profilin-3</fullName>
    </recommendedName>
</protein>
<feature type="initiator methionine" description="Removed" evidence="1">
    <location>
        <position position="1"/>
    </location>
</feature>
<feature type="chain" id="PRO_0000199676" description="Profilin-3">
    <location>
        <begin position="2"/>
        <end position="133"/>
    </location>
</feature>
<reference key="1">
    <citation type="journal article" date="1996" name="Sex. Plant Reprod.">
        <title>Molecular characterisation of profilin isoforms from tobacco (Nicotiana tabacum) pollen.</title>
        <authorList>
            <person name="Mittermann I."/>
            <person name="Heiss S."/>
            <person name="Dietrich K."/>
            <person name="Valenta R."/>
            <person name="Heberle-Bors E."/>
        </authorList>
        <dbReference type="AGRICOLA" id="IND20526767"/>
    </citation>
    <scope>NUCLEOTIDE SEQUENCE [MRNA]</scope>
    <source>
        <strain>cv. Petit Havana</strain>
        <tissue>Pollen</tissue>
    </source>
</reference>
<evidence type="ECO:0000250" key="1"/>
<evidence type="ECO:0000305" key="2"/>
<gene>
    <name type="primary">PRO3</name>
</gene>
<keyword id="KW-0009">Actin-binding</keyword>
<keyword id="KW-0963">Cytoplasm</keyword>
<keyword id="KW-0206">Cytoskeleton</keyword>
<keyword id="KW-1185">Reference proteome</keyword>
<name>PROF3_TOBAC</name>
<organism>
    <name type="scientific">Nicotiana tabacum</name>
    <name type="common">Common tobacco</name>
    <dbReference type="NCBI Taxonomy" id="4097"/>
    <lineage>
        <taxon>Eukaryota</taxon>
        <taxon>Viridiplantae</taxon>
        <taxon>Streptophyta</taxon>
        <taxon>Embryophyta</taxon>
        <taxon>Tracheophyta</taxon>
        <taxon>Spermatophyta</taxon>
        <taxon>Magnoliopsida</taxon>
        <taxon>eudicotyledons</taxon>
        <taxon>Gunneridae</taxon>
        <taxon>Pentapetalae</taxon>
        <taxon>asterids</taxon>
        <taxon>lamiids</taxon>
        <taxon>Solanales</taxon>
        <taxon>Solanaceae</taxon>
        <taxon>Nicotianoideae</taxon>
        <taxon>Nicotianeae</taxon>
        <taxon>Nicotiana</taxon>
    </lineage>
</organism>
<sequence length="133" mass="14559">MSWQTYVDDHLMVDFEGQGQHLAAAAILGHDGSVWAQSPHFPKFKPEEITNIMKDFDEPGFLAPTGLFLAGIKYMVIQGEPGAVIRGKKGSGGITIKKTNQALIFGLYEEPVTPGQCNMVVEKIGDYLVDQGY</sequence>
<dbReference type="EMBL" id="X93466">
    <property type="protein sequence ID" value="CAA63752.1"/>
    <property type="molecule type" value="mRNA"/>
</dbReference>
<dbReference type="SMR" id="Q9ST98"/>
<dbReference type="STRING" id="4097.Q9ST98"/>
<dbReference type="Allergome" id="1407">
    <property type="allergen name" value="Nic t 8"/>
</dbReference>
<dbReference type="PaxDb" id="4097-Q9ST98"/>
<dbReference type="Proteomes" id="UP000084051">
    <property type="component" value="Unplaced"/>
</dbReference>
<dbReference type="GO" id="GO:0005938">
    <property type="term" value="C:cell cortex"/>
    <property type="evidence" value="ECO:0000318"/>
    <property type="project" value="GO_Central"/>
</dbReference>
<dbReference type="GO" id="GO:0005856">
    <property type="term" value="C:cytoskeleton"/>
    <property type="evidence" value="ECO:0007669"/>
    <property type="project" value="UniProtKB-SubCell"/>
</dbReference>
<dbReference type="GO" id="GO:0003785">
    <property type="term" value="F:actin monomer binding"/>
    <property type="evidence" value="ECO:0000318"/>
    <property type="project" value="GO_Central"/>
</dbReference>
<dbReference type="CDD" id="cd00148">
    <property type="entry name" value="PROF"/>
    <property type="match status" value="1"/>
</dbReference>
<dbReference type="FunFam" id="3.30.450.30:FF:000001">
    <property type="entry name" value="Profilin"/>
    <property type="match status" value="1"/>
</dbReference>
<dbReference type="Gene3D" id="3.30.450.30">
    <property type="entry name" value="Dynein light chain 2a, cytoplasmic"/>
    <property type="match status" value="1"/>
</dbReference>
<dbReference type="InterPro" id="IPR048278">
    <property type="entry name" value="PFN"/>
</dbReference>
<dbReference type="InterPro" id="IPR005455">
    <property type="entry name" value="PFN_euk"/>
</dbReference>
<dbReference type="InterPro" id="IPR036140">
    <property type="entry name" value="PFN_sf"/>
</dbReference>
<dbReference type="InterPro" id="IPR027310">
    <property type="entry name" value="Profilin_CS"/>
</dbReference>
<dbReference type="PANTHER" id="PTHR11604">
    <property type="entry name" value="PROFILIN"/>
    <property type="match status" value="1"/>
</dbReference>
<dbReference type="PANTHER" id="PTHR11604:SF25">
    <property type="entry name" value="PROFILIN-5"/>
    <property type="match status" value="1"/>
</dbReference>
<dbReference type="Pfam" id="PF00235">
    <property type="entry name" value="Profilin"/>
    <property type="match status" value="1"/>
</dbReference>
<dbReference type="PRINTS" id="PR00392">
    <property type="entry name" value="PROFILIN"/>
</dbReference>
<dbReference type="PRINTS" id="PR01640">
    <property type="entry name" value="PROFILINPLNT"/>
</dbReference>
<dbReference type="SMART" id="SM00392">
    <property type="entry name" value="PROF"/>
    <property type="match status" value="1"/>
</dbReference>
<dbReference type="SUPFAM" id="SSF55770">
    <property type="entry name" value="Profilin (actin-binding protein)"/>
    <property type="match status" value="1"/>
</dbReference>
<dbReference type="PROSITE" id="PS00414">
    <property type="entry name" value="PROFILIN"/>
    <property type="match status" value="1"/>
</dbReference>
<proteinExistence type="evidence at transcript level"/>
<comment type="function">
    <text evidence="1">Binds to actin and affects the structure of the cytoskeleton. At high concentrations, profilin prevents the polymerization of actin, whereas it enhances it at low concentrations. By binding to PIP2, it inhibits the formation of IP3 and DG (By similarity).</text>
</comment>
<comment type="subunit">
    <text>Occurs in many kinds of cells as a complex with monomeric actin in a 1:1 ratio.</text>
</comment>
<comment type="subcellular location">
    <subcellularLocation>
        <location evidence="1">Cytoplasm</location>
        <location evidence="1">Cytoskeleton</location>
    </subcellularLocation>
</comment>
<comment type="similarity">
    <text evidence="2">Belongs to the profilin family.</text>
</comment>